<accession>A2BZ43</accession>
<evidence type="ECO:0000255" key="1">
    <source>
        <dbReference type="HAMAP-Rule" id="MF_00175"/>
    </source>
</evidence>
<evidence type="ECO:0000255" key="2">
    <source>
        <dbReference type="PROSITE-ProRule" id="PRU01250"/>
    </source>
</evidence>
<reference key="1">
    <citation type="journal article" date="2007" name="PLoS Genet.">
        <title>Patterns and implications of gene gain and loss in the evolution of Prochlorococcus.</title>
        <authorList>
            <person name="Kettler G.C."/>
            <person name="Martiny A.C."/>
            <person name="Huang K."/>
            <person name="Zucker J."/>
            <person name="Coleman M.L."/>
            <person name="Rodrigue S."/>
            <person name="Chen F."/>
            <person name="Lapidus A."/>
            <person name="Ferriera S."/>
            <person name="Johnson J."/>
            <person name="Steglich C."/>
            <person name="Church G.M."/>
            <person name="Richardson P."/>
            <person name="Chisholm S.W."/>
        </authorList>
    </citation>
    <scope>NUCLEOTIDE SEQUENCE [LARGE SCALE GENOMIC DNA]</scope>
    <source>
        <strain>MIT 9515</strain>
    </source>
</reference>
<protein>
    <recommendedName>
        <fullName evidence="1">ATP-dependent Clp protease ATP-binding subunit ClpX</fullName>
    </recommendedName>
</protein>
<feature type="chain" id="PRO_1000024615" description="ATP-dependent Clp protease ATP-binding subunit ClpX">
    <location>
        <begin position="1"/>
        <end position="455"/>
    </location>
</feature>
<feature type="domain" description="ClpX-type ZB" evidence="2">
    <location>
        <begin position="1"/>
        <end position="51"/>
    </location>
</feature>
<feature type="binding site" evidence="2">
    <location>
        <position position="10"/>
    </location>
    <ligand>
        <name>Zn(2+)</name>
        <dbReference type="ChEBI" id="CHEBI:29105"/>
    </ligand>
</feature>
<feature type="binding site" evidence="2">
    <location>
        <position position="13"/>
    </location>
    <ligand>
        <name>Zn(2+)</name>
        <dbReference type="ChEBI" id="CHEBI:29105"/>
    </ligand>
</feature>
<feature type="binding site" evidence="2">
    <location>
        <position position="32"/>
    </location>
    <ligand>
        <name>Zn(2+)</name>
        <dbReference type="ChEBI" id="CHEBI:29105"/>
    </ligand>
</feature>
<feature type="binding site" evidence="2">
    <location>
        <position position="35"/>
    </location>
    <ligand>
        <name>Zn(2+)</name>
        <dbReference type="ChEBI" id="CHEBI:29105"/>
    </ligand>
</feature>
<feature type="binding site" evidence="1">
    <location>
        <begin position="146"/>
        <end position="153"/>
    </location>
    <ligand>
        <name>ATP</name>
        <dbReference type="ChEBI" id="CHEBI:30616"/>
    </ligand>
</feature>
<dbReference type="EMBL" id="CP000552">
    <property type="protein sequence ID" value="ABM73054.1"/>
    <property type="molecule type" value="Genomic_DNA"/>
</dbReference>
<dbReference type="RefSeq" id="WP_011821139.1">
    <property type="nucleotide sequence ID" value="NC_008817.1"/>
</dbReference>
<dbReference type="SMR" id="A2BZ43"/>
<dbReference type="STRING" id="167542.P9515_18471"/>
<dbReference type="GeneID" id="60201774"/>
<dbReference type="KEGG" id="pmc:P9515_18471"/>
<dbReference type="eggNOG" id="COG1219">
    <property type="taxonomic scope" value="Bacteria"/>
</dbReference>
<dbReference type="HOGENOM" id="CLU_014218_8_2_3"/>
<dbReference type="OrthoDB" id="9804062at2"/>
<dbReference type="Proteomes" id="UP000001589">
    <property type="component" value="Chromosome"/>
</dbReference>
<dbReference type="GO" id="GO:0009376">
    <property type="term" value="C:HslUV protease complex"/>
    <property type="evidence" value="ECO:0007669"/>
    <property type="project" value="TreeGrafter"/>
</dbReference>
<dbReference type="GO" id="GO:0005524">
    <property type="term" value="F:ATP binding"/>
    <property type="evidence" value="ECO:0007669"/>
    <property type="project" value="UniProtKB-UniRule"/>
</dbReference>
<dbReference type="GO" id="GO:0016887">
    <property type="term" value="F:ATP hydrolysis activity"/>
    <property type="evidence" value="ECO:0007669"/>
    <property type="project" value="InterPro"/>
</dbReference>
<dbReference type="GO" id="GO:0140662">
    <property type="term" value="F:ATP-dependent protein folding chaperone"/>
    <property type="evidence" value="ECO:0007669"/>
    <property type="project" value="InterPro"/>
</dbReference>
<dbReference type="GO" id="GO:0046983">
    <property type="term" value="F:protein dimerization activity"/>
    <property type="evidence" value="ECO:0007669"/>
    <property type="project" value="InterPro"/>
</dbReference>
<dbReference type="GO" id="GO:0051082">
    <property type="term" value="F:unfolded protein binding"/>
    <property type="evidence" value="ECO:0007669"/>
    <property type="project" value="UniProtKB-UniRule"/>
</dbReference>
<dbReference type="GO" id="GO:0008270">
    <property type="term" value="F:zinc ion binding"/>
    <property type="evidence" value="ECO:0007669"/>
    <property type="project" value="InterPro"/>
</dbReference>
<dbReference type="GO" id="GO:0051301">
    <property type="term" value="P:cell division"/>
    <property type="evidence" value="ECO:0007669"/>
    <property type="project" value="TreeGrafter"/>
</dbReference>
<dbReference type="GO" id="GO:0051603">
    <property type="term" value="P:proteolysis involved in protein catabolic process"/>
    <property type="evidence" value="ECO:0007669"/>
    <property type="project" value="TreeGrafter"/>
</dbReference>
<dbReference type="CDD" id="cd19497">
    <property type="entry name" value="RecA-like_ClpX"/>
    <property type="match status" value="1"/>
</dbReference>
<dbReference type="FunFam" id="1.10.8.60:FF:000002">
    <property type="entry name" value="ATP-dependent Clp protease ATP-binding subunit ClpX"/>
    <property type="match status" value="1"/>
</dbReference>
<dbReference type="FunFam" id="3.40.50.300:FF:000005">
    <property type="entry name" value="ATP-dependent Clp protease ATP-binding subunit ClpX"/>
    <property type="match status" value="1"/>
</dbReference>
<dbReference type="Gene3D" id="1.10.8.60">
    <property type="match status" value="1"/>
</dbReference>
<dbReference type="Gene3D" id="6.20.220.10">
    <property type="entry name" value="ClpX chaperone, C4-type zinc finger domain"/>
    <property type="match status" value="1"/>
</dbReference>
<dbReference type="Gene3D" id="3.40.50.300">
    <property type="entry name" value="P-loop containing nucleotide triphosphate hydrolases"/>
    <property type="match status" value="1"/>
</dbReference>
<dbReference type="HAMAP" id="MF_00175">
    <property type="entry name" value="ClpX"/>
    <property type="match status" value="1"/>
</dbReference>
<dbReference type="InterPro" id="IPR003593">
    <property type="entry name" value="AAA+_ATPase"/>
</dbReference>
<dbReference type="InterPro" id="IPR050052">
    <property type="entry name" value="ATP-dep_Clp_protease_ClpX"/>
</dbReference>
<dbReference type="InterPro" id="IPR003959">
    <property type="entry name" value="ATPase_AAA_core"/>
</dbReference>
<dbReference type="InterPro" id="IPR019489">
    <property type="entry name" value="Clp_ATPase_C"/>
</dbReference>
<dbReference type="InterPro" id="IPR004487">
    <property type="entry name" value="Clp_protease_ATP-bd_su_ClpX"/>
</dbReference>
<dbReference type="InterPro" id="IPR046425">
    <property type="entry name" value="ClpX_bact"/>
</dbReference>
<dbReference type="InterPro" id="IPR027417">
    <property type="entry name" value="P-loop_NTPase"/>
</dbReference>
<dbReference type="InterPro" id="IPR010603">
    <property type="entry name" value="Znf_CppX_C4"/>
</dbReference>
<dbReference type="InterPro" id="IPR038366">
    <property type="entry name" value="Znf_CppX_C4_sf"/>
</dbReference>
<dbReference type="NCBIfam" id="TIGR00382">
    <property type="entry name" value="clpX"/>
    <property type="match status" value="1"/>
</dbReference>
<dbReference type="NCBIfam" id="NF003745">
    <property type="entry name" value="PRK05342.1"/>
    <property type="match status" value="1"/>
</dbReference>
<dbReference type="PANTHER" id="PTHR48102:SF7">
    <property type="entry name" value="ATP-DEPENDENT CLP PROTEASE ATP-BINDING SUBUNIT CLPX-LIKE, MITOCHONDRIAL"/>
    <property type="match status" value="1"/>
</dbReference>
<dbReference type="PANTHER" id="PTHR48102">
    <property type="entry name" value="ATP-DEPENDENT CLP PROTEASE ATP-BINDING SUBUNIT CLPX-LIKE, MITOCHONDRIAL-RELATED"/>
    <property type="match status" value="1"/>
</dbReference>
<dbReference type="Pfam" id="PF07724">
    <property type="entry name" value="AAA_2"/>
    <property type="match status" value="1"/>
</dbReference>
<dbReference type="Pfam" id="PF10431">
    <property type="entry name" value="ClpB_D2-small"/>
    <property type="match status" value="1"/>
</dbReference>
<dbReference type="Pfam" id="PF06689">
    <property type="entry name" value="zf-C4_ClpX"/>
    <property type="match status" value="1"/>
</dbReference>
<dbReference type="SMART" id="SM00382">
    <property type="entry name" value="AAA"/>
    <property type="match status" value="1"/>
</dbReference>
<dbReference type="SMART" id="SM01086">
    <property type="entry name" value="ClpB_D2-small"/>
    <property type="match status" value="1"/>
</dbReference>
<dbReference type="SMART" id="SM00994">
    <property type="entry name" value="zf-C4_ClpX"/>
    <property type="match status" value="1"/>
</dbReference>
<dbReference type="SUPFAM" id="SSF57716">
    <property type="entry name" value="Glucocorticoid receptor-like (DNA-binding domain)"/>
    <property type="match status" value="1"/>
</dbReference>
<dbReference type="SUPFAM" id="SSF52540">
    <property type="entry name" value="P-loop containing nucleoside triphosphate hydrolases"/>
    <property type="match status" value="1"/>
</dbReference>
<dbReference type="PROSITE" id="PS51902">
    <property type="entry name" value="CLPX_ZB"/>
    <property type="match status" value="1"/>
</dbReference>
<proteinExistence type="inferred from homology"/>
<gene>
    <name evidence="1" type="primary">clpX</name>
    <name type="ordered locus">P9515_18471</name>
</gene>
<comment type="function">
    <text evidence="1">ATP-dependent specificity component of the Clp protease. It directs the protease to specific substrates. Can perform chaperone functions in the absence of ClpP.</text>
</comment>
<comment type="subunit">
    <text evidence="1">Component of the ClpX-ClpP complex. Forms a hexameric ring that, in the presence of ATP, binds to fourteen ClpP subunits assembled into a disk-like structure with a central cavity, resembling the structure of eukaryotic proteasomes.</text>
</comment>
<comment type="similarity">
    <text evidence="1">Belongs to the ClpX chaperone family.</text>
</comment>
<keyword id="KW-0067">ATP-binding</keyword>
<keyword id="KW-0143">Chaperone</keyword>
<keyword id="KW-0479">Metal-binding</keyword>
<keyword id="KW-0547">Nucleotide-binding</keyword>
<keyword id="KW-0862">Zinc</keyword>
<sequence length="455" mass="50686">MAKFDAHLKCSFCAKSQDQVRKLIAGPGVYICDECIDLCNEILDEELIDTQAKLNNSTQVKKKLPINNPDTSIPFELTSIPKPLEIKTFLDNQVVGQESAKKILSVAVYNHYKRLTWRLKEENKDNNSNDCHATKLQKSNILLIGPTGSGKTLLAQTLAEFLDVPFAVADATTLTEAGYVGEDVENILLRLLQKSEMNVDLAQKGIIYIDEIDKIARKSENPSITRDVSGEGVQQALLKMLEGTIANVPPQGGRKHPYHDCIQIDTSQILFICGGAFIGLEDIVQKRLGRHSIGFTTNSDESKIDAKKLVDSRDALKNLELDDLVKYGLIPEFIGRIPVCAVLDRLTKETLESILTEPRDALVKQFKTLLSMDNVELNFEPESVEAIANEAFKRKTGARALRSIIEELMLDLMYTLPSQEEVTKFTITKKMVDNLFSSKIVKLPAGSHRIIKESA</sequence>
<organism>
    <name type="scientific">Prochlorococcus marinus (strain MIT 9515)</name>
    <dbReference type="NCBI Taxonomy" id="167542"/>
    <lineage>
        <taxon>Bacteria</taxon>
        <taxon>Bacillati</taxon>
        <taxon>Cyanobacteriota</taxon>
        <taxon>Cyanophyceae</taxon>
        <taxon>Synechococcales</taxon>
        <taxon>Prochlorococcaceae</taxon>
        <taxon>Prochlorococcus</taxon>
    </lineage>
</organism>
<name>CLPX_PROM5</name>